<name>MSCL_ZYMMO</name>
<reference key="1">
    <citation type="journal article" date="2005" name="Nat. Biotechnol.">
        <title>The genome sequence of the ethanologenic bacterium Zymomonas mobilis ZM4.</title>
        <authorList>
            <person name="Seo J.-S."/>
            <person name="Chong H."/>
            <person name="Park H.S."/>
            <person name="Yoon K.-O."/>
            <person name="Jung C."/>
            <person name="Kim J.J."/>
            <person name="Hong J.H."/>
            <person name="Kim H."/>
            <person name="Kim J.-H."/>
            <person name="Kil J.-I."/>
            <person name="Park C.J."/>
            <person name="Oh H.-M."/>
            <person name="Lee J.-S."/>
            <person name="Jin S.-J."/>
            <person name="Um H.-W."/>
            <person name="Lee H.-J."/>
            <person name="Oh S.-J."/>
            <person name="Kim J.Y."/>
            <person name="Kang H.L."/>
            <person name="Lee S.Y."/>
            <person name="Lee K.J."/>
            <person name="Kang H.S."/>
        </authorList>
    </citation>
    <scope>NUCLEOTIDE SEQUENCE [LARGE SCALE GENOMIC DNA]</scope>
    <source>
        <strain>ATCC 31821 / ZM4 / CP4</strain>
    </source>
</reference>
<organism>
    <name type="scientific">Zymomonas mobilis subsp. mobilis (strain ATCC 31821 / ZM4 / CP4)</name>
    <dbReference type="NCBI Taxonomy" id="264203"/>
    <lineage>
        <taxon>Bacteria</taxon>
        <taxon>Pseudomonadati</taxon>
        <taxon>Pseudomonadota</taxon>
        <taxon>Alphaproteobacteria</taxon>
        <taxon>Sphingomonadales</taxon>
        <taxon>Zymomonadaceae</taxon>
        <taxon>Zymomonas</taxon>
    </lineage>
</organism>
<protein>
    <recommendedName>
        <fullName evidence="1">Large-conductance mechanosensitive channel</fullName>
    </recommendedName>
</protein>
<evidence type="ECO:0000255" key="1">
    <source>
        <dbReference type="HAMAP-Rule" id="MF_00115"/>
    </source>
</evidence>
<sequence length="154" mass="16679">MSILTDFKNFISKGNVLGLGIAVIMGDAFNKIISSVTGDLLMPIIGAVFGGVDFSGFFIRLGAVPAGYTGSLTSYNDLKKAGVPLFGYGQFLTVVVNFVIVAFILFMIMKLAAKLQKELDKTEAKKEEKIAEAAPTPEDIVLLREIRDELRGKK</sequence>
<comment type="function">
    <text evidence="1">Channel that opens in response to stretch forces in the membrane lipid bilayer. May participate in the regulation of osmotic pressure changes within the cell.</text>
</comment>
<comment type="subunit">
    <text evidence="1">Homopentamer.</text>
</comment>
<comment type="subcellular location">
    <subcellularLocation>
        <location evidence="1">Cell inner membrane</location>
        <topology evidence="1">Multi-pass membrane protein</topology>
    </subcellularLocation>
</comment>
<comment type="similarity">
    <text evidence="1">Belongs to the MscL family.</text>
</comment>
<feature type="chain" id="PRO_0000238056" description="Large-conductance mechanosensitive channel">
    <location>
        <begin position="1"/>
        <end position="154"/>
    </location>
</feature>
<feature type="transmembrane region" description="Helical" evidence="1">
    <location>
        <begin position="16"/>
        <end position="36"/>
    </location>
</feature>
<feature type="transmembrane region" description="Helical" evidence="1">
    <location>
        <begin position="39"/>
        <end position="59"/>
    </location>
</feature>
<feature type="transmembrane region" description="Helical" evidence="1">
    <location>
        <begin position="89"/>
        <end position="109"/>
    </location>
</feature>
<gene>
    <name evidence="1" type="primary">mscL</name>
    <name type="ordered locus">ZMO1044</name>
</gene>
<proteinExistence type="inferred from homology"/>
<accession>Q5NNP2</accession>
<dbReference type="EMBL" id="AE008692">
    <property type="protein sequence ID" value="AAV89668.1"/>
    <property type="molecule type" value="Genomic_DNA"/>
</dbReference>
<dbReference type="RefSeq" id="WP_011240886.1">
    <property type="nucleotide sequence ID" value="NZ_CP035711.1"/>
</dbReference>
<dbReference type="STRING" id="264203.ZMO1044"/>
<dbReference type="GeneID" id="79903819"/>
<dbReference type="KEGG" id="zmo:ZMO1044"/>
<dbReference type="eggNOG" id="COG1970">
    <property type="taxonomic scope" value="Bacteria"/>
</dbReference>
<dbReference type="HOGENOM" id="CLU_095787_0_1_5"/>
<dbReference type="Proteomes" id="UP000001173">
    <property type="component" value="Chromosome"/>
</dbReference>
<dbReference type="GO" id="GO:0005886">
    <property type="term" value="C:plasma membrane"/>
    <property type="evidence" value="ECO:0007669"/>
    <property type="project" value="UniProtKB-SubCell"/>
</dbReference>
<dbReference type="GO" id="GO:0008381">
    <property type="term" value="F:mechanosensitive monoatomic ion channel activity"/>
    <property type="evidence" value="ECO:0007669"/>
    <property type="project" value="UniProtKB-UniRule"/>
</dbReference>
<dbReference type="Gene3D" id="1.10.1200.120">
    <property type="entry name" value="Large-conductance mechanosensitive channel, MscL, domain 1"/>
    <property type="match status" value="1"/>
</dbReference>
<dbReference type="HAMAP" id="MF_00115">
    <property type="entry name" value="MscL"/>
    <property type="match status" value="1"/>
</dbReference>
<dbReference type="InterPro" id="IPR001185">
    <property type="entry name" value="MS_channel"/>
</dbReference>
<dbReference type="InterPro" id="IPR037673">
    <property type="entry name" value="MSC/AndL"/>
</dbReference>
<dbReference type="InterPro" id="IPR036019">
    <property type="entry name" value="MscL_channel"/>
</dbReference>
<dbReference type="NCBIfam" id="TIGR00220">
    <property type="entry name" value="mscL"/>
    <property type="match status" value="1"/>
</dbReference>
<dbReference type="NCBIfam" id="NF010557">
    <property type="entry name" value="PRK13952.1"/>
    <property type="match status" value="1"/>
</dbReference>
<dbReference type="PANTHER" id="PTHR30266:SF2">
    <property type="entry name" value="LARGE-CONDUCTANCE MECHANOSENSITIVE CHANNEL"/>
    <property type="match status" value="1"/>
</dbReference>
<dbReference type="PANTHER" id="PTHR30266">
    <property type="entry name" value="MECHANOSENSITIVE CHANNEL MSCL"/>
    <property type="match status" value="1"/>
</dbReference>
<dbReference type="Pfam" id="PF01741">
    <property type="entry name" value="MscL"/>
    <property type="match status" value="1"/>
</dbReference>
<dbReference type="PRINTS" id="PR01264">
    <property type="entry name" value="MECHCHANNEL"/>
</dbReference>
<dbReference type="SUPFAM" id="SSF81330">
    <property type="entry name" value="Gated mechanosensitive channel"/>
    <property type="match status" value="1"/>
</dbReference>
<keyword id="KW-0997">Cell inner membrane</keyword>
<keyword id="KW-1003">Cell membrane</keyword>
<keyword id="KW-0407">Ion channel</keyword>
<keyword id="KW-0406">Ion transport</keyword>
<keyword id="KW-0472">Membrane</keyword>
<keyword id="KW-1185">Reference proteome</keyword>
<keyword id="KW-0812">Transmembrane</keyword>
<keyword id="KW-1133">Transmembrane helix</keyword>
<keyword id="KW-0813">Transport</keyword>